<accession>Q9MGD7</accession>
<comment type="function">
    <text evidence="1">Mitochondrial membrane ATP synthase (F(1)F(0) ATP synthase or Complex V) produces ATP from ADP in the presence of a proton gradient across the membrane which is generated by electron transport complexes of the respiratory chain. F-type ATPases consist of two structural domains, F(1) - containing the extramembraneous catalytic core and F(0) - containing the membrane proton channel, linked together by a central stalk and a peripheral stalk. During catalysis, ATP synthesis in the catalytic domain of F(1) is coupled via a rotary mechanism of the central stalk subunits to proton translocation. Part of the complex F(0) domain. Minor subunit located with subunit a in the membrane (By similarity).</text>
</comment>
<comment type="subunit">
    <text evidence="1">F-type ATPases have 2 components, CF(1) - the catalytic core - and CF(0) - the membrane proton channel.</text>
</comment>
<comment type="subcellular location">
    <subcellularLocation>
        <location>Mitochondrion membrane</location>
        <topology>Single-pass membrane protein</topology>
    </subcellularLocation>
</comment>
<comment type="similarity">
    <text evidence="3">Belongs to the ATPase protein 8 family.</text>
</comment>
<name>ATP8_PENMO</name>
<geneLocation type="mitochondrion"/>
<sequence>MPQMAPLLWLNLFLMFSATFVMFIVLNYFIKVPSKIEKSSSQLQKMEMTWKW</sequence>
<organism>
    <name type="scientific">Penaeus monodon</name>
    <name type="common">Giant tiger prawn</name>
    <dbReference type="NCBI Taxonomy" id="6687"/>
    <lineage>
        <taxon>Eukaryota</taxon>
        <taxon>Metazoa</taxon>
        <taxon>Ecdysozoa</taxon>
        <taxon>Arthropoda</taxon>
        <taxon>Crustacea</taxon>
        <taxon>Multicrustacea</taxon>
        <taxon>Malacostraca</taxon>
        <taxon>Eumalacostraca</taxon>
        <taxon>Eucarida</taxon>
        <taxon>Decapoda</taxon>
        <taxon>Dendrobranchiata</taxon>
        <taxon>Penaeoidea</taxon>
        <taxon>Penaeidae</taxon>
        <taxon>Penaeus</taxon>
    </lineage>
</organism>
<reference key="1">
    <citation type="journal article" date="2000" name="Mol. Biol. Evol.">
        <title>The complete sequence of the mitochondrial genome of the crustacean Penaeus monodon: are malacostracan crustaceans more closely related to insects than to branchiopods?</title>
        <authorList>
            <person name="Wilson K."/>
            <person name="Cahill V."/>
            <person name="Ballment E."/>
            <person name="Benzie J."/>
        </authorList>
    </citation>
    <scope>NUCLEOTIDE SEQUENCE [GENOMIC DNA]</scope>
</reference>
<gene>
    <name type="primary">MT-ATP8</name>
    <name type="synonym">ATP8</name>
    <name type="synonym">ATPASE8</name>
    <name type="synonym">MTATP8</name>
</gene>
<protein>
    <recommendedName>
        <fullName>ATP synthase protein 8</fullName>
    </recommendedName>
    <alternativeName>
        <fullName>A6L</fullName>
    </alternativeName>
    <alternativeName>
        <fullName>F-ATPase subunit 8</fullName>
    </alternativeName>
</protein>
<keyword id="KW-0066">ATP synthesis</keyword>
<keyword id="KW-0138">CF(0)</keyword>
<keyword id="KW-0375">Hydrogen ion transport</keyword>
<keyword id="KW-0406">Ion transport</keyword>
<keyword id="KW-0472">Membrane</keyword>
<keyword id="KW-0496">Mitochondrion</keyword>
<keyword id="KW-0812">Transmembrane</keyword>
<keyword id="KW-1133">Transmembrane helix</keyword>
<keyword id="KW-0813">Transport</keyword>
<evidence type="ECO:0000250" key="1"/>
<evidence type="ECO:0000255" key="2"/>
<evidence type="ECO:0000305" key="3"/>
<dbReference type="EMBL" id="AF217843">
    <property type="protein sequence ID" value="AAF43373.1"/>
    <property type="molecule type" value="Genomic_DNA"/>
</dbReference>
<dbReference type="RefSeq" id="NP_038291.1">
    <property type="nucleotide sequence ID" value="NC_002184.1"/>
</dbReference>
<dbReference type="SMR" id="Q9MGD7"/>
<dbReference type="EnsemblMetazoa" id="GeneID_808976_df_mr">
    <property type="protein sequence ID" value="NP_038291.1"/>
    <property type="gene ID" value="GeneID_808976"/>
</dbReference>
<dbReference type="GeneID" id="808976"/>
<dbReference type="KEGG" id="pmoo:808976"/>
<dbReference type="CTD" id="4509"/>
<dbReference type="OrthoDB" id="7721627at2759"/>
<dbReference type="GO" id="GO:0031966">
    <property type="term" value="C:mitochondrial membrane"/>
    <property type="evidence" value="ECO:0007669"/>
    <property type="project" value="UniProtKB-SubCell"/>
</dbReference>
<dbReference type="GO" id="GO:0045259">
    <property type="term" value="C:proton-transporting ATP synthase complex"/>
    <property type="evidence" value="ECO:0007669"/>
    <property type="project" value="UniProtKB-KW"/>
</dbReference>
<dbReference type="GO" id="GO:0015078">
    <property type="term" value="F:proton transmembrane transporter activity"/>
    <property type="evidence" value="ECO:0007669"/>
    <property type="project" value="InterPro"/>
</dbReference>
<dbReference type="GO" id="GO:0015986">
    <property type="term" value="P:proton motive force-driven ATP synthesis"/>
    <property type="evidence" value="ECO:0007669"/>
    <property type="project" value="InterPro"/>
</dbReference>
<dbReference type="InterPro" id="IPR001421">
    <property type="entry name" value="ATP8_metazoa"/>
</dbReference>
<dbReference type="Pfam" id="PF00895">
    <property type="entry name" value="ATP-synt_8"/>
    <property type="match status" value="1"/>
</dbReference>
<proteinExistence type="inferred from homology"/>
<feature type="chain" id="PRO_0000195566" description="ATP synthase protein 8">
    <location>
        <begin position="1"/>
        <end position="52"/>
    </location>
</feature>
<feature type="transmembrane region" description="Helical" evidence="2">
    <location>
        <begin position="6"/>
        <end position="26"/>
    </location>
</feature>